<evidence type="ECO:0000255" key="1">
    <source>
        <dbReference type="HAMAP-Rule" id="MF_01013"/>
    </source>
</evidence>
<accession>A1VK42</accession>
<feature type="chain" id="PRO_1000063109" description="Imidazole glycerol phosphate synthase subunit HisF">
    <location>
        <begin position="1"/>
        <end position="259"/>
    </location>
</feature>
<feature type="active site" evidence="1">
    <location>
        <position position="11"/>
    </location>
</feature>
<feature type="active site" evidence="1">
    <location>
        <position position="130"/>
    </location>
</feature>
<keyword id="KW-0028">Amino-acid biosynthesis</keyword>
<keyword id="KW-0963">Cytoplasm</keyword>
<keyword id="KW-0368">Histidine biosynthesis</keyword>
<keyword id="KW-0456">Lyase</keyword>
<keyword id="KW-1185">Reference proteome</keyword>
<reference key="1">
    <citation type="journal article" date="2009" name="Environ. Microbiol.">
        <title>The genome of Polaromonas naphthalenivorans strain CJ2, isolated from coal tar-contaminated sediment, reveals physiological and metabolic versatility and evolution through extensive horizontal gene transfer.</title>
        <authorList>
            <person name="Yagi J.M."/>
            <person name="Sims D."/>
            <person name="Brettin T."/>
            <person name="Bruce D."/>
            <person name="Madsen E.L."/>
        </authorList>
    </citation>
    <scope>NUCLEOTIDE SEQUENCE [LARGE SCALE GENOMIC DNA]</scope>
    <source>
        <strain>CJ2</strain>
    </source>
</reference>
<protein>
    <recommendedName>
        <fullName evidence="1">Imidazole glycerol phosphate synthase subunit HisF</fullName>
        <ecNumber evidence="1">4.3.2.10</ecNumber>
    </recommendedName>
    <alternativeName>
        <fullName evidence="1">IGP synthase cyclase subunit</fullName>
    </alternativeName>
    <alternativeName>
        <fullName evidence="1">IGP synthase subunit HisF</fullName>
    </alternativeName>
    <alternativeName>
        <fullName evidence="1">ImGP synthase subunit HisF</fullName>
        <shortName evidence="1">IGPS subunit HisF</shortName>
    </alternativeName>
</protein>
<gene>
    <name evidence="1" type="primary">hisF</name>
    <name type="ordered locus">Pnap_0701</name>
</gene>
<sequence>MLAKRIIPCLDVTGGRVVKGVNFVELRDAGDPVEIAARYNDQGADELTFLDITATSDGRDLILHIIEAVASQVFIPLTVGGGVRTVEDVRRLLNAGADKTSFNSAALANPQVITDASAKYGAQCIVVAIDAKRRSDEDALLRGAGWDVYSHGGRKNTGLDAVAWAVEMAQRGAGEILLTSMNRDGTKSGFDLELTRAVSDAVSVPVIASGGVGNLDHLADGVQLGGADAVLAASIFHYGEYTVAQAKRHMASRGIPVRL</sequence>
<organism>
    <name type="scientific">Polaromonas naphthalenivorans (strain CJ2)</name>
    <dbReference type="NCBI Taxonomy" id="365044"/>
    <lineage>
        <taxon>Bacteria</taxon>
        <taxon>Pseudomonadati</taxon>
        <taxon>Pseudomonadota</taxon>
        <taxon>Betaproteobacteria</taxon>
        <taxon>Burkholderiales</taxon>
        <taxon>Comamonadaceae</taxon>
        <taxon>Polaromonas</taxon>
    </lineage>
</organism>
<proteinExistence type="inferred from homology"/>
<comment type="function">
    <text evidence="1">IGPS catalyzes the conversion of PRFAR and glutamine to IGP, AICAR and glutamate. The HisF subunit catalyzes the cyclization activity that produces IGP and AICAR from PRFAR using the ammonia provided by the HisH subunit.</text>
</comment>
<comment type="catalytic activity">
    <reaction evidence="1">
        <text>5-[(5-phospho-1-deoxy-D-ribulos-1-ylimino)methylamino]-1-(5-phospho-beta-D-ribosyl)imidazole-4-carboxamide + L-glutamine = D-erythro-1-(imidazol-4-yl)glycerol 3-phosphate + 5-amino-1-(5-phospho-beta-D-ribosyl)imidazole-4-carboxamide + L-glutamate + H(+)</text>
        <dbReference type="Rhea" id="RHEA:24793"/>
        <dbReference type="ChEBI" id="CHEBI:15378"/>
        <dbReference type="ChEBI" id="CHEBI:29985"/>
        <dbReference type="ChEBI" id="CHEBI:58278"/>
        <dbReference type="ChEBI" id="CHEBI:58359"/>
        <dbReference type="ChEBI" id="CHEBI:58475"/>
        <dbReference type="ChEBI" id="CHEBI:58525"/>
        <dbReference type="EC" id="4.3.2.10"/>
    </reaction>
</comment>
<comment type="pathway">
    <text evidence="1">Amino-acid biosynthesis; L-histidine biosynthesis; L-histidine from 5-phospho-alpha-D-ribose 1-diphosphate: step 5/9.</text>
</comment>
<comment type="subunit">
    <text evidence="1">Heterodimer of HisH and HisF.</text>
</comment>
<comment type="subcellular location">
    <subcellularLocation>
        <location evidence="1">Cytoplasm</location>
    </subcellularLocation>
</comment>
<comment type="similarity">
    <text evidence="1">Belongs to the HisA/HisF family.</text>
</comment>
<name>HIS6_POLNA</name>
<dbReference type="EC" id="4.3.2.10" evidence="1"/>
<dbReference type="EMBL" id="CP000529">
    <property type="protein sequence ID" value="ABM36020.1"/>
    <property type="molecule type" value="Genomic_DNA"/>
</dbReference>
<dbReference type="RefSeq" id="WP_011800115.1">
    <property type="nucleotide sequence ID" value="NC_008781.1"/>
</dbReference>
<dbReference type="SMR" id="A1VK42"/>
<dbReference type="STRING" id="365044.Pnap_0701"/>
<dbReference type="KEGG" id="pna:Pnap_0701"/>
<dbReference type="eggNOG" id="COG0107">
    <property type="taxonomic scope" value="Bacteria"/>
</dbReference>
<dbReference type="HOGENOM" id="CLU_048577_4_0_4"/>
<dbReference type="OrthoDB" id="9781903at2"/>
<dbReference type="UniPathway" id="UPA00031">
    <property type="reaction ID" value="UER00010"/>
</dbReference>
<dbReference type="Proteomes" id="UP000000644">
    <property type="component" value="Chromosome"/>
</dbReference>
<dbReference type="GO" id="GO:0005737">
    <property type="term" value="C:cytoplasm"/>
    <property type="evidence" value="ECO:0007669"/>
    <property type="project" value="UniProtKB-SubCell"/>
</dbReference>
<dbReference type="GO" id="GO:0000107">
    <property type="term" value="F:imidazoleglycerol-phosphate synthase activity"/>
    <property type="evidence" value="ECO:0007669"/>
    <property type="project" value="UniProtKB-UniRule"/>
</dbReference>
<dbReference type="GO" id="GO:0016829">
    <property type="term" value="F:lyase activity"/>
    <property type="evidence" value="ECO:0007669"/>
    <property type="project" value="UniProtKB-KW"/>
</dbReference>
<dbReference type="GO" id="GO:0000105">
    <property type="term" value="P:L-histidine biosynthetic process"/>
    <property type="evidence" value="ECO:0007669"/>
    <property type="project" value="UniProtKB-UniRule"/>
</dbReference>
<dbReference type="CDD" id="cd04731">
    <property type="entry name" value="HisF"/>
    <property type="match status" value="1"/>
</dbReference>
<dbReference type="FunFam" id="3.20.20.70:FF:000006">
    <property type="entry name" value="Imidazole glycerol phosphate synthase subunit HisF"/>
    <property type="match status" value="1"/>
</dbReference>
<dbReference type="Gene3D" id="3.20.20.70">
    <property type="entry name" value="Aldolase class I"/>
    <property type="match status" value="1"/>
</dbReference>
<dbReference type="HAMAP" id="MF_01013">
    <property type="entry name" value="HisF"/>
    <property type="match status" value="1"/>
</dbReference>
<dbReference type="InterPro" id="IPR013785">
    <property type="entry name" value="Aldolase_TIM"/>
</dbReference>
<dbReference type="InterPro" id="IPR006062">
    <property type="entry name" value="His_biosynth"/>
</dbReference>
<dbReference type="InterPro" id="IPR004651">
    <property type="entry name" value="HisF"/>
</dbReference>
<dbReference type="InterPro" id="IPR050064">
    <property type="entry name" value="IGPS_HisA/HisF"/>
</dbReference>
<dbReference type="InterPro" id="IPR011060">
    <property type="entry name" value="RibuloseP-bd_barrel"/>
</dbReference>
<dbReference type="NCBIfam" id="TIGR00735">
    <property type="entry name" value="hisF"/>
    <property type="match status" value="1"/>
</dbReference>
<dbReference type="PANTHER" id="PTHR21235:SF2">
    <property type="entry name" value="IMIDAZOLE GLYCEROL PHOSPHATE SYNTHASE HISHF"/>
    <property type="match status" value="1"/>
</dbReference>
<dbReference type="PANTHER" id="PTHR21235">
    <property type="entry name" value="IMIDAZOLE GLYCEROL PHOSPHATE SYNTHASE SUBUNIT HISF/H IGP SYNTHASE SUBUNIT HISF/H"/>
    <property type="match status" value="1"/>
</dbReference>
<dbReference type="Pfam" id="PF00977">
    <property type="entry name" value="His_biosynth"/>
    <property type="match status" value="1"/>
</dbReference>
<dbReference type="SUPFAM" id="SSF51366">
    <property type="entry name" value="Ribulose-phoshate binding barrel"/>
    <property type="match status" value="1"/>
</dbReference>